<organism>
    <name type="scientific">Arabidopsis thaliana</name>
    <name type="common">Mouse-ear cress</name>
    <dbReference type="NCBI Taxonomy" id="3702"/>
    <lineage>
        <taxon>Eukaryota</taxon>
        <taxon>Viridiplantae</taxon>
        <taxon>Streptophyta</taxon>
        <taxon>Embryophyta</taxon>
        <taxon>Tracheophyta</taxon>
        <taxon>Spermatophyta</taxon>
        <taxon>Magnoliopsida</taxon>
        <taxon>eudicotyledons</taxon>
        <taxon>Gunneridae</taxon>
        <taxon>Pentapetalae</taxon>
        <taxon>rosids</taxon>
        <taxon>malvids</taxon>
        <taxon>Brassicales</taxon>
        <taxon>Brassicaceae</taxon>
        <taxon>Camelineae</taxon>
        <taxon>Arabidopsis</taxon>
    </lineage>
</organism>
<name>M1050_ARATH</name>
<evidence type="ECO:0000305" key="1"/>
<evidence type="ECO:0000312" key="2">
    <source>
        <dbReference type="Araport" id="AT2G07672"/>
    </source>
</evidence>
<evidence type="ECO:0000312" key="3">
    <source>
        <dbReference type="Araport" id="ATMG01050"/>
    </source>
</evidence>
<comment type="subcellular location">
    <subcellularLocation>
        <location evidence="1">Mitochondrion</location>
    </subcellularLocation>
</comment>
<comment type="miscellaneous">
    <text>A stretch of 270 kb of the mitochondrial genome is duplicated within the centromere of chromosome 2 resulting in the duplication of the gene. The expression of this duplicated gene (At2g07672) is demonstrated.</text>
</comment>
<protein>
    <recommendedName>
        <fullName>Uncharacterized mitochondrial protein AtMg01050</fullName>
    </recommendedName>
    <alternativeName>
        <fullName>ORF159</fullName>
    </alternativeName>
</protein>
<dbReference type="EMBL" id="Y08501">
    <property type="protein sequence ID" value="CAA69791.1"/>
    <property type="molecule type" value="Genomic_DNA"/>
</dbReference>
<dbReference type="EMBL" id="BK010421">
    <property type="status" value="NOT_ANNOTATED_CDS"/>
    <property type="molecule type" value="Genomic_DNA"/>
</dbReference>
<dbReference type="EMBL" id="AC007143">
    <property type="protein sequence ID" value="AAM15416.1"/>
    <property type="molecule type" value="Genomic_DNA"/>
</dbReference>
<dbReference type="EMBL" id="AC007730">
    <property type="protein sequence ID" value="AAM15510.1"/>
    <property type="molecule type" value="Genomic_DNA"/>
</dbReference>
<dbReference type="EMBL" id="CP002685">
    <property type="protein sequence ID" value="AEC06065.1"/>
    <property type="molecule type" value="Genomic_DNA"/>
</dbReference>
<dbReference type="EMBL" id="DQ446476">
    <property type="protein sequence ID" value="ABE65431.1"/>
    <property type="molecule type" value="Genomic_DNA"/>
</dbReference>
<dbReference type="EMBL" id="DQ069801">
    <property type="protein sequence ID" value="AAY82260.1"/>
    <property type="molecule type" value="mRNA"/>
</dbReference>
<dbReference type="RefSeq" id="NP_001318207.1">
    <property type="nucleotide sequence ID" value="NM_001335343.1"/>
</dbReference>
<dbReference type="RefSeq" id="NP_085559.1">
    <property type="nucleotide sequence ID" value="NC_001284.2"/>
</dbReference>
<dbReference type="STRING" id="3702.P92539"/>
<dbReference type="PaxDb" id="3702-ATMG01050.1"/>
<dbReference type="EnsemblPlants" id="ATMG01050.1">
    <property type="protein sequence ID" value="ATMG01050.1"/>
    <property type="gene ID" value="ATMG01050"/>
</dbReference>
<dbReference type="GeneID" id="28717838"/>
<dbReference type="Gramene" id="ATMG01050.1">
    <property type="protein sequence ID" value="ATMG01050.1"/>
    <property type="gene ID" value="ATMG01050"/>
</dbReference>
<dbReference type="KEGG" id="ath:AT2G07672"/>
<dbReference type="Araport" id="AT2G07672"/>
<dbReference type="Araport" id="ATMG01050"/>
<dbReference type="TAIR" id="AT2G07672"/>
<dbReference type="TAIR" id="ATMG01050">
    <property type="gene designation" value="ORF159"/>
</dbReference>
<dbReference type="HOGENOM" id="CLU_1663167_0_0_1"/>
<dbReference type="InParanoid" id="P92539"/>
<dbReference type="OrthoDB" id="10271580at2759"/>
<dbReference type="PRO" id="PR:P92539"/>
<dbReference type="Proteomes" id="UP000006548">
    <property type="component" value="Chromosome 2"/>
</dbReference>
<dbReference type="Proteomes" id="UP000006548">
    <property type="component" value="Mitochondrion MT"/>
</dbReference>
<dbReference type="ExpressionAtlas" id="P92539">
    <property type="expression patterns" value="baseline and differential"/>
</dbReference>
<dbReference type="GO" id="GO:0005739">
    <property type="term" value="C:mitochondrion"/>
    <property type="evidence" value="ECO:0007669"/>
    <property type="project" value="UniProtKB-SubCell"/>
</dbReference>
<feature type="chain" id="PRO_0000196809" description="Uncharacterized mitochondrial protein AtMg01050">
    <location>
        <begin position="1"/>
        <end position="159"/>
    </location>
</feature>
<feature type="sequence conflict" description="In Ref. 3; AAM15510 and 4; AEC06065." evidence="1" ref="3 4">
    <original>C</original>
    <variation>Y</variation>
    <location>
        <position position="114"/>
    </location>
</feature>
<proteinExistence type="evidence at transcript level"/>
<geneLocation type="mitochondrion"/>
<reference key="1">
    <citation type="journal article" date="1997" name="Nat. Genet.">
        <title>The mitochondrial genome of Arabidopsis thaliana contains 57 genes in 366,924 nucleotides.</title>
        <authorList>
            <person name="Unseld M."/>
            <person name="Marienfeld J.R."/>
            <person name="Brandt P."/>
            <person name="Brennicke A."/>
        </authorList>
    </citation>
    <scope>NUCLEOTIDE SEQUENCE [LARGE SCALE GENOMIC DNA]</scope>
    <source>
        <strain>cv. C24</strain>
    </source>
</reference>
<reference key="2">
    <citation type="journal article" date="2018" name="Plant Cell">
        <title>Correction of persistent errors in Arabidopsis reference mitochondrial genomes.</title>
        <authorList>
            <person name="Sloan D.B."/>
            <person name="Wu Z."/>
            <person name="Sharbrough J."/>
        </authorList>
    </citation>
    <scope>NUCLEOTIDE SEQUENCE [LARGE SCALE GENOMIC DNA]</scope>
    <source>
        <strain>cv. Columbia</strain>
    </source>
</reference>
<reference key="3">
    <citation type="journal article" date="1999" name="Nature">
        <title>Sequence and analysis of chromosome 2 of the plant Arabidopsis thaliana.</title>
        <authorList>
            <person name="Lin X."/>
            <person name="Kaul S."/>
            <person name="Rounsley S.D."/>
            <person name="Shea T.P."/>
            <person name="Benito M.-I."/>
            <person name="Town C.D."/>
            <person name="Fujii C.Y."/>
            <person name="Mason T.M."/>
            <person name="Bowman C.L."/>
            <person name="Barnstead M.E."/>
            <person name="Feldblyum T.V."/>
            <person name="Buell C.R."/>
            <person name="Ketchum K.A."/>
            <person name="Lee J.J."/>
            <person name="Ronning C.M."/>
            <person name="Koo H.L."/>
            <person name="Moffat K.S."/>
            <person name="Cronin L.A."/>
            <person name="Shen M."/>
            <person name="Pai G."/>
            <person name="Van Aken S."/>
            <person name="Umayam L."/>
            <person name="Tallon L.J."/>
            <person name="Gill J.E."/>
            <person name="Adams M.D."/>
            <person name="Carrera A.J."/>
            <person name="Creasy T.H."/>
            <person name="Goodman H.M."/>
            <person name="Somerville C.R."/>
            <person name="Copenhaver G.P."/>
            <person name="Preuss D."/>
            <person name="Nierman W.C."/>
            <person name="White O."/>
            <person name="Eisen J.A."/>
            <person name="Salzberg S.L."/>
            <person name="Fraser C.M."/>
            <person name="Venter J.C."/>
        </authorList>
    </citation>
    <scope>NUCLEOTIDE SEQUENCE [LARGE SCALE GENOMIC DNA] (AT2G07672)</scope>
    <source>
        <strain>cv. Columbia</strain>
    </source>
</reference>
<reference key="4">
    <citation type="journal article" date="2017" name="Plant J.">
        <title>Araport11: a complete reannotation of the Arabidopsis thaliana reference genome.</title>
        <authorList>
            <person name="Cheng C.Y."/>
            <person name="Krishnakumar V."/>
            <person name="Chan A.P."/>
            <person name="Thibaud-Nissen F."/>
            <person name="Schobel S."/>
            <person name="Town C.D."/>
        </authorList>
    </citation>
    <scope>GENOME REANNOTATION</scope>
    <scope>SEQUENCE REVISION (AT2G07672)</scope>
    <source>
        <strain>cv. Columbia</strain>
    </source>
</reference>
<reference key="5">
    <citation type="journal article" date="2006" name="Plant Biotechnol. J.">
        <title>Simultaneous high-throughput recombinational cloning of open reading frames in closed and open configurations.</title>
        <authorList>
            <person name="Underwood B.A."/>
            <person name="Vanderhaeghen R."/>
            <person name="Whitford R."/>
            <person name="Town C.D."/>
            <person name="Hilson P."/>
        </authorList>
    </citation>
    <scope>NUCLEOTIDE SEQUENCE [LARGE SCALE GENOMIC DNA] (AT2G07672)</scope>
    <source>
        <strain>cv. Columbia</strain>
    </source>
</reference>
<reference key="6">
    <citation type="journal article" date="2005" name="Plant Physiol.">
        <title>Analysis of the cDNAs of hypothetical genes on Arabidopsis chromosome 2 reveals numerous transcript variants.</title>
        <authorList>
            <person name="Xiao Y.-L."/>
            <person name="Smith S.R."/>
            <person name="Ishmael N."/>
            <person name="Redman J.C."/>
            <person name="Kumar N."/>
            <person name="Monaghan E.L."/>
            <person name="Ayele M."/>
            <person name="Haas B.J."/>
            <person name="Wu H.C."/>
            <person name="Town C.D."/>
        </authorList>
    </citation>
    <scope>NUCLEOTIDE SEQUENCE [LARGE SCALE MRNA] (AT2G07672)</scope>
    <source>
        <strain>cv. Columbia</strain>
    </source>
</reference>
<gene>
    <name evidence="3" type="ordered locus">AtMg01050</name>
</gene>
<gene>
    <name evidence="2" type="ordered locus">At2g07672</name>
</gene>
<accession>P92539</accession>
<accession>Q1ZXX5</accession>
<accession>Q27GM4</accession>
<accession>Q4PL87</accession>
<accession>Q8S876</accession>
<accession>Q8S8C5</accession>
<sequence>MAFNLFTTFTERLRLVSWRSVFEDTRSLRRFLIRIALVATGLVSKESAIVCHVLAGKVLRMYKTSRDPCLRIIVSLPLLSIYFRPDSIAKSNRKQRPWKEKIFHPDSRKMSCHCEPLPYQTRFDRQAPLQEYSIYPKSRKRLELDPQQNSTVVVQHDKF</sequence>
<keyword id="KW-0496">Mitochondrion</keyword>
<keyword id="KW-1185">Reference proteome</keyword>